<evidence type="ECO:0000250" key="1"/>
<evidence type="ECO:0000250" key="2">
    <source>
        <dbReference type="UniProtKB" id="P12003"/>
    </source>
</evidence>
<evidence type="ECO:0000250" key="3">
    <source>
        <dbReference type="UniProtKB" id="P85972"/>
    </source>
</evidence>
<evidence type="ECO:0000255" key="4"/>
<evidence type="ECO:0000256" key="5">
    <source>
        <dbReference type="SAM" id="MobiDB-lite"/>
    </source>
</evidence>
<evidence type="ECO:0000269" key="6">
    <source>
    </source>
</evidence>
<evidence type="ECO:0000305" key="7"/>
<gene>
    <name type="primary">Vinc</name>
    <name type="ORF">CG3299</name>
</gene>
<organism>
    <name type="scientific">Drosophila melanogaster</name>
    <name type="common">Fruit fly</name>
    <dbReference type="NCBI Taxonomy" id="7227"/>
    <lineage>
        <taxon>Eukaryota</taxon>
        <taxon>Metazoa</taxon>
        <taxon>Ecdysozoa</taxon>
        <taxon>Arthropoda</taxon>
        <taxon>Hexapoda</taxon>
        <taxon>Insecta</taxon>
        <taxon>Pterygota</taxon>
        <taxon>Neoptera</taxon>
        <taxon>Endopterygota</taxon>
        <taxon>Diptera</taxon>
        <taxon>Brachycera</taxon>
        <taxon>Muscomorpha</taxon>
        <taxon>Ephydroidea</taxon>
        <taxon>Drosophilidae</taxon>
        <taxon>Drosophila</taxon>
        <taxon>Sophophora</taxon>
    </lineage>
</organism>
<name>VINC_DROME</name>
<accession>O46037</accession>
<protein>
    <recommendedName>
        <fullName>Vinculin</fullName>
    </recommendedName>
</protein>
<dbReference type="EMBL" id="AE014298">
    <property type="protein sequence ID" value="AAF45752.1"/>
    <property type="molecule type" value="Genomic_DNA"/>
</dbReference>
<dbReference type="EMBL" id="AL009193">
    <property type="protein sequence ID" value="CAA15691.1"/>
    <property type="molecule type" value="Genomic_DNA"/>
</dbReference>
<dbReference type="EMBL" id="AY128501">
    <property type="protein sequence ID" value="AAM75094.1"/>
    <property type="molecule type" value="mRNA"/>
</dbReference>
<dbReference type="RefSeq" id="NP_001284813.1">
    <property type="nucleotide sequence ID" value="NM_001297884.1"/>
</dbReference>
<dbReference type="RefSeq" id="NP_001284814.1">
    <property type="nucleotide sequence ID" value="NM_001297885.1"/>
</dbReference>
<dbReference type="RefSeq" id="NP_476820.1">
    <property type="nucleotide sequence ID" value="NM_057472.3"/>
</dbReference>
<dbReference type="SMR" id="O46037"/>
<dbReference type="BioGRID" id="57740">
    <property type="interactions" value="15"/>
</dbReference>
<dbReference type="FunCoup" id="O46037">
    <property type="interactions" value="751"/>
</dbReference>
<dbReference type="IntAct" id="O46037">
    <property type="interactions" value="138"/>
</dbReference>
<dbReference type="STRING" id="7227.FBpp0309623"/>
<dbReference type="GlyGen" id="O46037">
    <property type="glycosylation" value="1 site"/>
</dbReference>
<dbReference type="iPTMnet" id="O46037"/>
<dbReference type="PaxDb" id="7227-FBpp0070404"/>
<dbReference type="DNASU" id="31201"/>
<dbReference type="EnsemblMetazoa" id="FBtr0070420">
    <property type="protein sequence ID" value="FBpp0070404"/>
    <property type="gene ID" value="FBgn0004397"/>
</dbReference>
<dbReference type="EnsemblMetazoa" id="FBtr0342770">
    <property type="protein sequence ID" value="FBpp0309622"/>
    <property type="gene ID" value="FBgn0004397"/>
</dbReference>
<dbReference type="EnsemblMetazoa" id="FBtr0342771">
    <property type="protein sequence ID" value="FBpp0309623"/>
    <property type="gene ID" value="FBgn0004397"/>
</dbReference>
<dbReference type="GeneID" id="31201"/>
<dbReference type="KEGG" id="dme:Dmel_CG3299"/>
<dbReference type="AGR" id="FB:FBgn0004397"/>
<dbReference type="CTD" id="31201"/>
<dbReference type="FlyBase" id="FBgn0004397">
    <property type="gene designation" value="Vinc"/>
</dbReference>
<dbReference type="VEuPathDB" id="VectorBase:FBgn0004397"/>
<dbReference type="eggNOG" id="KOG3681">
    <property type="taxonomic scope" value="Eukaryota"/>
</dbReference>
<dbReference type="HOGENOM" id="CLU_012338_0_0_1"/>
<dbReference type="InParanoid" id="O46037"/>
<dbReference type="OMA" id="ANNLCEL"/>
<dbReference type="OrthoDB" id="29742at2759"/>
<dbReference type="PhylomeDB" id="O46037"/>
<dbReference type="Reactome" id="R-DME-114608">
    <property type="pathway name" value="Platelet degranulation"/>
</dbReference>
<dbReference type="Reactome" id="R-DME-445355">
    <property type="pathway name" value="Smooth Muscle Contraction"/>
</dbReference>
<dbReference type="Reactome" id="R-DME-5674135">
    <property type="pathway name" value="MAP2K and MAPK activation"/>
</dbReference>
<dbReference type="Reactome" id="R-DME-6798695">
    <property type="pathway name" value="Neutrophil degranulation"/>
</dbReference>
<dbReference type="SignaLink" id="O46037"/>
<dbReference type="BioGRID-ORCS" id="31201">
    <property type="hits" value="0 hits in 1 CRISPR screen"/>
</dbReference>
<dbReference type="GenomeRNAi" id="31201"/>
<dbReference type="PRO" id="PR:O46037"/>
<dbReference type="Proteomes" id="UP000000803">
    <property type="component" value="Chromosome X"/>
</dbReference>
<dbReference type="Bgee" id="FBgn0004397">
    <property type="expression patterns" value="Expressed in outer photoreceptor cell (Drosophila) in insect head and 137 other cell types or tissues"/>
</dbReference>
<dbReference type="ExpressionAtlas" id="O46037">
    <property type="expression patterns" value="baseline and differential"/>
</dbReference>
<dbReference type="GO" id="GO:0015629">
    <property type="term" value="C:actin cytoskeleton"/>
    <property type="evidence" value="ECO:0007669"/>
    <property type="project" value="InterPro"/>
</dbReference>
<dbReference type="GO" id="GO:0005912">
    <property type="term" value="C:adherens junction"/>
    <property type="evidence" value="ECO:0000318"/>
    <property type="project" value="GO_Central"/>
</dbReference>
<dbReference type="GO" id="GO:0044291">
    <property type="term" value="C:cell-cell contact zone"/>
    <property type="evidence" value="ECO:0000318"/>
    <property type="project" value="GO_Central"/>
</dbReference>
<dbReference type="GO" id="GO:0005737">
    <property type="term" value="C:cytoplasm"/>
    <property type="evidence" value="ECO:0000318"/>
    <property type="project" value="GO_Central"/>
</dbReference>
<dbReference type="GO" id="GO:0098592">
    <property type="term" value="C:cytoplasmic side of apical plasma membrane"/>
    <property type="evidence" value="ECO:0000314"/>
    <property type="project" value="FlyBase"/>
</dbReference>
<dbReference type="GO" id="GO:0005856">
    <property type="term" value="C:cytoskeleton"/>
    <property type="evidence" value="ECO:0000318"/>
    <property type="project" value="GO_Central"/>
</dbReference>
<dbReference type="GO" id="GO:0005925">
    <property type="term" value="C:focal adhesion"/>
    <property type="evidence" value="ECO:0000250"/>
    <property type="project" value="FlyBase"/>
</dbReference>
<dbReference type="GO" id="GO:0005886">
    <property type="term" value="C:plasma membrane"/>
    <property type="evidence" value="ECO:0000318"/>
    <property type="project" value="GO_Central"/>
</dbReference>
<dbReference type="GO" id="GO:0051015">
    <property type="term" value="F:actin filament binding"/>
    <property type="evidence" value="ECO:0007669"/>
    <property type="project" value="InterPro"/>
</dbReference>
<dbReference type="GO" id="GO:0045294">
    <property type="term" value="F:alpha-catenin binding"/>
    <property type="evidence" value="ECO:0000318"/>
    <property type="project" value="GO_Central"/>
</dbReference>
<dbReference type="GO" id="GO:0008013">
    <property type="term" value="F:beta-catenin binding"/>
    <property type="evidence" value="ECO:0000318"/>
    <property type="project" value="GO_Central"/>
</dbReference>
<dbReference type="GO" id="GO:0005198">
    <property type="term" value="F:structural molecule activity"/>
    <property type="evidence" value="ECO:0007669"/>
    <property type="project" value="InterPro"/>
</dbReference>
<dbReference type="GO" id="GO:0007155">
    <property type="term" value="P:cell adhesion"/>
    <property type="evidence" value="ECO:0000318"/>
    <property type="project" value="GO_Central"/>
</dbReference>
<dbReference type="FunFam" id="1.20.120.230:FF:000010">
    <property type="entry name" value="Vinculin a"/>
    <property type="match status" value="1"/>
</dbReference>
<dbReference type="FunFam" id="1.20.120.230:FF:000021">
    <property type="entry name" value="Vinculin, isoform B"/>
    <property type="match status" value="1"/>
</dbReference>
<dbReference type="FunFam" id="1.20.120.230:FF:000024">
    <property type="entry name" value="Vinculin, isoform B"/>
    <property type="match status" value="1"/>
</dbReference>
<dbReference type="FunFam" id="1.20.120.230:FF:000025">
    <property type="entry name" value="Vinculin, isoform B"/>
    <property type="match status" value="1"/>
</dbReference>
<dbReference type="FunFam" id="1.20.120.810:FF:000004">
    <property type="entry name" value="Vinculin, isoform B"/>
    <property type="match status" value="1"/>
</dbReference>
<dbReference type="FunFam" id="1.20.120.810:FF:000008">
    <property type="entry name" value="Vinculin, isoform B"/>
    <property type="match status" value="1"/>
</dbReference>
<dbReference type="Gene3D" id="1.20.120.230">
    <property type="entry name" value="Alpha-catenin/vinculin-like"/>
    <property type="match status" value="4"/>
</dbReference>
<dbReference type="Gene3D" id="1.20.120.810">
    <property type="entry name" value="Vinculin, Vh2 four-helix bundle"/>
    <property type="match status" value="2"/>
</dbReference>
<dbReference type="InterPro" id="IPR036723">
    <property type="entry name" value="Alpha-catenin/vinculin-like_sf"/>
</dbReference>
<dbReference type="InterPro" id="IPR017997">
    <property type="entry name" value="Vinculin"/>
</dbReference>
<dbReference type="InterPro" id="IPR006077">
    <property type="entry name" value="Vinculin/catenin"/>
</dbReference>
<dbReference type="InterPro" id="IPR000633">
    <property type="entry name" value="Vinculin_CS"/>
</dbReference>
<dbReference type="PANTHER" id="PTHR46180">
    <property type="entry name" value="VINCULIN"/>
    <property type="match status" value="1"/>
</dbReference>
<dbReference type="Pfam" id="PF01044">
    <property type="entry name" value="Vinculin"/>
    <property type="match status" value="1"/>
</dbReference>
<dbReference type="PRINTS" id="PR00806">
    <property type="entry name" value="VINCULIN"/>
</dbReference>
<dbReference type="SUPFAM" id="SSF47220">
    <property type="entry name" value="alpha-catenin/vinculin-like"/>
    <property type="match status" value="6"/>
</dbReference>
<dbReference type="PROSITE" id="PS00664">
    <property type="entry name" value="VINCULIN_2"/>
    <property type="match status" value="1"/>
</dbReference>
<reference key="1">
    <citation type="journal article" date="1997" name="FEBS Lett.">
        <title>Vinculin gene is non-essential in Drosophila melanogaster.</title>
        <authorList>
            <person name="Alatortsev V.E."/>
            <person name="Kramerova I.A."/>
            <person name="Frolov M.V."/>
            <person name="Lavrov S.A."/>
            <person name="Westphal E.D."/>
        </authorList>
    </citation>
    <scope>NUCLEOTIDE SEQUENCE [GENOMIC DNA]</scope>
</reference>
<reference key="2">
    <citation type="journal article" date="2000" name="Science">
        <title>The genome sequence of Drosophila melanogaster.</title>
        <authorList>
            <person name="Adams M.D."/>
            <person name="Celniker S.E."/>
            <person name="Holt R.A."/>
            <person name="Evans C.A."/>
            <person name="Gocayne J.D."/>
            <person name="Amanatides P.G."/>
            <person name="Scherer S.E."/>
            <person name="Li P.W."/>
            <person name="Hoskins R.A."/>
            <person name="Galle R.F."/>
            <person name="George R.A."/>
            <person name="Lewis S.E."/>
            <person name="Richards S."/>
            <person name="Ashburner M."/>
            <person name="Henderson S.N."/>
            <person name="Sutton G.G."/>
            <person name="Wortman J.R."/>
            <person name="Yandell M.D."/>
            <person name="Zhang Q."/>
            <person name="Chen L.X."/>
            <person name="Brandon R.C."/>
            <person name="Rogers Y.-H.C."/>
            <person name="Blazej R.G."/>
            <person name="Champe M."/>
            <person name="Pfeiffer B.D."/>
            <person name="Wan K.H."/>
            <person name="Doyle C."/>
            <person name="Baxter E.G."/>
            <person name="Helt G."/>
            <person name="Nelson C.R."/>
            <person name="Miklos G.L.G."/>
            <person name="Abril J.F."/>
            <person name="Agbayani A."/>
            <person name="An H.-J."/>
            <person name="Andrews-Pfannkoch C."/>
            <person name="Baldwin D."/>
            <person name="Ballew R.M."/>
            <person name="Basu A."/>
            <person name="Baxendale J."/>
            <person name="Bayraktaroglu L."/>
            <person name="Beasley E.M."/>
            <person name="Beeson K.Y."/>
            <person name="Benos P.V."/>
            <person name="Berman B.P."/>
            <person name="Bhandari D."/>
            <person name="Bolshakov S."/>
            <person name="Borkova D."/>
            <person name="Botchan M.R."/>
            <person name="Bouck J."/>
            <person name="Brokstein P."/>
            <person name="Brottier P."/>
            <person name="Burtis K.C."/>
            <person name="Busam D.A."/>
            <person name="Butler H."/>
            <person name="Cadieu E."/>
            <person name="Center A."/>
            <person name="Chandra I."/>
            <person name="Cherry J.M."/>
            <person name="Cawley S."/>
            <person name="Dahlke C."/>
            <person name="Davenport L.B."/>
            <person name="Davies P."/>
            <person name="de Pablos B."/>
            <person name="Delcher A."/>
            <person name="Deng Z."/>
            <person name="Mays A.D."/>
            <person name="Dew I."/>
            <person name="Dietz S.M."/>
            <person name="Dodson K."/>
            <person name="Doup L.E."/>
            <person name="Downes M."/>
            <person name="Dugan-Rocha S."/>
            <person name="Dunkov B.C."/>
            <person name="Dunn P."/>
            <person name="Durbin K.J."/>
            <person name="Evangelista C.C."/>
            <person name="Ferraz C."/>
            <person name="Ferriera S."/>
            <person name="Fleischmann W."/>
            <person name="Fosler C."/>
            <person name="Gabrielian A.E."/>
            <person name="Garg N.S."/>
            <person name="Gelbart W.M."/>
            <person name="Glasser K."/>
            <person name="Glodek A."/>
            <person name="Gong F."/>
            <person name="Gorrell J.H."/>
            <person name="Gu Z."/>
            <person name="Guan P."/>
            <person name="Harris M."/>
            <person name="Harris N.L."/>
            <person name="Harvey D.A."/>
            <person name="Heiman T.J."/>
            <person name="Hernandez J.R."/>
            <person name="Houck J."/>
            <person name="Hostin D."/>
            <person name="Houston K.A."/>
            <person name="Howland T.J."/>
            <person name="Wei M.-H."/>
            <person name="Ibegwam C."/>
            <person name="Jalali M."/>
            <person name="Kalush F."/>
            <person name="Karpen G.H."/>
            <person name="Ke Z."/>
            <person name="Kennison J.A."/>
            <person name="Ketchum K.A."/>
            <person name="Kimmel B.E."/>
            <person name="Kodira C.D."/>
            <person name="Kraft C.L."/>
            <person name="Kravitz S."/>
            <person name="Kulp D."/>
            <person name="Lai Z."/>
            <person name="Lasko P."/>
            <person name="Lei Y."/>
            <person name="Levitsky A.A."/>
            <person name="Li J.H."/>
            <person name="Li Z."/>
            <person name="Liang Y."/>
            <person name="Lin X."/>
            <person name="Liu X."/>
            <person name="Mattei B."/>
            <person name="McIntosh T.C."/>
            <person name="McLeod M.P."/>
            <person name="McPherson D."/>
            <person name="Merkulov G."/>
            <person name="Milshina N.V."/>
            <person name="Mobarry C."/>
            <person name="Morris J."/>
            <person name="Moshrefi A."/>
            <person name="Mount S.M."/>
            <person name="Moy M."/>
            <person name="Murphy B."/>
            <person name="Murphy L."/>
            <person name="Muzny D.M."/>
            <person name="Nelson D.L."/>
            <person name="Nelson D.R."/>
            <person name="Nelson K.A."/>
            <person name="Nixon K."/>
            <person name="Nusskern D.R."/>
            <person name="Pacleb J.M."/>
            <person name="Palazzolo M."/>
            <person name="Pittman G.S."/>
            <person name="Pan S."/>
            <person name="Pollard J."/>
            <person name="Puri V."/>
            <person name="Reese M.G."/>
            <person name="Reinert K."/>
            <person name="Remington K."/>
            <person name="Saunders R.D.C."/>
            <person name="Scheeler F."/>
            <person name="Shen H."/>
            <person name="Shue B.C."/>
            <person name="Siden-Kiamos I."/>
            <person name="Simpson M."/>
            <person name="Skupski M.P."/>
            <person name="Smith T.J."/>
            <person name="Spier E."/>
            <person name="Spradling A.C."/>
            <person name="Stapleton M."/>
            <person name="Strong R."/>
            <person name="Sun E."/>
            <person name="Svirskas R."/>
            <person name="Tector C."/>
            <person name="Turner R."/>
            <person name="Venter E."/>
            <person name="Wang A.H."/>
            <person name="Wang X."/>
            <person name="Wang Z.-Y."/>
            <person name="Wassarman D.A."/>
            <person name="Weinstock G.M."/>
            <person name="Weissenbach J."/>
            <person name="Williams S.M."/>
            <person name="Woodage T."/>
            <person name="Worley K.C."/>
            <person name="Wu D."/>
            <person name="Yang S."/>
            <person name="Yao Q.A."/>
            <person name="Ye J."/>
            <person name="Yeh R.-F."/>
            <person name="Zaveri J.S."/>
            <person name="Zhan M."/>
            <person name="Zhang G."/>
            <person name="Zhao Q."/>
            <person name="Zheng L."/>
            <person name="Zheng X.H."/>
            <person name="Zhong F.N."/>
            <person name="Zhong W."/>
            <person name="Zhou X."/>
            <person name="Zhu S.C."/>
            <person name="Zhu X."/>
            <person name="Smith H.O."/>
            <person name="Gibbs R.A."/>
            <person name="Myers E.W."/>
            <person name="Rubin G.M."/>
            <person name="Venter J.C."/>
        </authorList>
    </citation>
    <scope>NUCLEOTIDE SEQUENCE [LARGE SCALE GENOMIC DNA]</scope>
    <source>
        <strain>Berkeley</strain>
    </source>
</reference>
<reference key="3">
    <citation type="journal article" date="2002" name="Genome Biol.">
        <title>Annotation of the Drosophila melanogaster euchromatic genome: a systematic review.</title>
        <authorList>
            <person name="Misra S."/>
            <person name="Crosby M.A."/>
            <person name="Mungall C.J."/>
            <person name="Matthews B.B."/>
            <person name="Campbell K.S."/>
            <person name="Hradecky P."/>
            <person name="Huang Y."/>
            <person name="Kaminker J.S."/>
            <person name="Millburn G.H."/>
            <person name="Prochnik S.E."/>
            <person name="Smith C.D."/>
            <person name="Tupy J.L."/>
            <person name="Whitfield E.J."/>
            <person name="Bayraktaroglu L."/>
            <person name="Berman B.P."/>
            <person name="Bettencourt B.R."/>
            <person name="Celniker S.E."/>
            <person name="de Grey A.D.N.J."/>
            <person name="Drysdale R.A."/>
            <person name="Harris N.L."/>
            <person name="Richter J."/>
            <person name="Russo S."/>
            <person name="Schroeder A.J."/>
            <person name="Shu S.Q."/>
            <person name="Stapleton M."/>
            <person name="Yamada C."/>
            <person name="Ashburner M."/>
            <person name="Gelbart W.M."/>
            <person name="Rubin G.M."/>
            <person name="Lewis S.E."/>
        </authorList>
    </citation>
    <scope>GENOME REANNOTATION</scope>
    <source>
        <strain>Berkeley</strain>
    </source>
</reference>
<reference key="4">
    <citation type="journal article" date="2000" name="Science">
        <title>From sequence to chromosome: the tip of the X chromosome of D. melanogaster.</title>
        <authorList>
            <person name="Benos P.V."/>
            <person name="Gatt M.K."/>
            <person name="Ashburner M."/>
            <person name="Murphy L."/>
            <person name="Harris D."/>
            <person name="Barrell B.G."/>
            <person name="Ferraz C."/>
            <person name="Vidal S."/>
            <person name="Brun C."/>
            <person name="Demailles J."/>
            <person name="Cadieu E."/>
            <person name="Dreano S."/>
            <person name="Gloux S."/>
            <person name="Lelaure V."/>
            <person name="Mottier S."/>
            <person name="Galibert F."/>
            <person name="Borkova D."/>
            <person name="Minana B."/>
            <person name="Kafatos F.C."/>
            <person name="Louis C."/>
            <person name="Siden-Kiamos I."/>
            <person name="Bolshakov S."/>
            <person name="Papagiannakis G."/>
            <person name="Spanos L."/>
            <person name="Cox S."/>
            <person name="Madueno E."/>
            <person name="de Pablos B."/>
            <person name="Modolell J."/>
            <person name="Peter A."/>
            <person name="Schoettler P."/>
            <person name="Werner M."/>
            <person name="Mourkioti F."/>
            <person name="Beinert N."/>
            <person name="Dowe G."/>
            <person name="Schaefer U."/>
            <person name="Jaeckle H."/>
            <person name="Bucheton A."/>
            <person name="Callister D.M."/>
            <person name="Campbell L.A."/>
            <person name="Darlamitsou A."/>
            <person name="Henderson N.S."/>
            <person name="McMillan P.J."/>
            <person name="Salles C."/>
            <person name="Tait E.A."/>
            <person name="Valenti P."/>
            <person name="Saunders R.D.C."/>
            <person name="Glover D.M."/>
        </authorList>
    </citation>
    <scope>NUCLEOTIDE SEQUENCE [LARGE SCALE GENOMIC DNA]</scope>
    <source>
        <strain>Oregon-R</strain>
    </source>
</reference>
<reference key="5">
    <citation type="journal article" date="2002" name="Genome Biol.">
        <title>A Drosophila full-length cDNA resource.</title>
        <authorList>
            <person name="Stapleton M."/>
            <person name="Carlson J.W."/>
            <person name="Brokstein P."/>
            <person name="Yu C."/>
            <person name="Champe M."/>
            <person name="George R.A."/>
            <person name="Guarin H."/>
            <person name="Kronmiller B."/>
            <person name="Pacleb J.M."/>
            <person name="Park S."/>
            <person name="Wan K.H."/>
            <person name="Rubin G.M."/>
            <person name="Celniker S.E."/>
        </authorList>
    </citation>
    <scope>NUCLEOTIDE SEQUENCE [LARGE SCALE MRNA]</scope>
    <source>
        <strain>Berkeley</strain>
        <tissue>Embryo</tissue>
    </source>
</reference>
<reference key="6">
    <citation type="journal article" date="2007" name="Mol. Biosyst.">
        <title>An integrated chemical, mass spectrometric and computational strategy for (quantitative) phosphoproteomics: application to Drosophila melanogaster Kc167 cells.</title>
        <authorList>
            <person name="Bodenmiller B."/>
            <person name="Mueller L.N."/>
            <person name="Pedrioli P.G.A."/>
            <person name="Pflieger D."/>
            <person name="Juenger M.A."/>
            <person name="Eng J.K."/>
            <person name="Aebersold R."/>
            <person name="Tao W.A."/>
        </authorList>
    </citation>
    <scope>PHOSPHORYLATION [LARGE SCALE ANALYSIS] AT THR-774</scope>
    <scope>IDENTIFICATION BY MASS SPECTROMETRY</scope>
</reference>
<proteinExistence type="evidence at protein level"/>
<comment type="function">
    <text evidence="2">Involved in cell adhesion. May be involved in the attachment of the actin-based microfilaments to the plasma membrane.</text>
</comment>
<comment type="subunit">
    <text evidence="1">Exhibits self-association properties.</text>
</comment>
<comment type="interaction">
    <interactant intactId="EBI-121490">
        <id>O46037</id>
    </interactant>
    <interactant intactId="EBI-148231">
        <id>A1Z866</id>
        <label>CAP</label>
    </interactant>
    <organismsDiffer>false</organismsDiffer>
    <experiments>3</experiments>
</comment>
<comment type="interaction">
    <interactant intactId="EBI-121490">
        <id>O46037</id>
    </interactant>
    <interactant intactId="EBI-175835">
        <id>Q8INW7</id>
        <label>Pax</label>
    </interactant>
    <organismsDiffer>false</organismsDiffer>
    <experiments>3</experiments>
</comment>
<comment type="subcellular location">
    <subcellularLocation>
        <location evidence="3">Cytoplasm</location>
        <location evidence="3">Cytoskeleton</location>
    </subcellularLocation>
    <subcellularLocation>
        <location evidence="2">Cell junction</location>
        <location evidence="2">Adherens junction</location>
    </subcellularLocation>
    <subcellularLocation>
        <location evidence="2">Cell membrane</location>
        <topology evidence="2">Peripheral membrane protein</topology>
        <orientation evidence="2">Cytoplasmic side</orientation>
    </subcellularLocation>
    <subcellularLocation>
        <location evidence="2">Cell junction</location>
    </subcellularLocation>
    <text evidence="2">Cytoplasmic face of adhesion plaques.</text>
</comment>
<comment type="similarity">
    <text evidence="7">Belongs to the vinculin/alpha-catenin family.</text>
</comment>
<feature type="chain" id="PRO_0000064259" description="Vinculin">
    <location>
        <begin position="1"/>
        <end position="961"/>
    </location>
</feature>
<feature type="repeat" description="1" evidence="4">
    <location>
        <begin position="258"/>
        <end position="362"/>
    </location>
</feature>
<feature type="repeat" description="2" evidence="4">
    <location>
        <begin position="371"/>
        <end position="470"/>
    </location>
</feature>
<feature type="region of interest" description="2 X repeats" evidence="4">
    <location>
        <begin position="258"/>
        <end position="470"/>
    </location>
</feature>
<feature type="region of interest" description="Disordered" evidence="5">
    <location>
        <begin position="720"/>
        <end position="778"/>
    </location>
</feature>
<feature type="compositionally biased region" description="Pro residues" evidence="5">
    <location>
        <begin position="723"/>
        <end position="738"/>
    </location>
</feature>
<feature type="modified residue" description="Phosphothreonine" evidence="6">
    <location>
        <position position="774"/>
    </location>
</feature>
<keyword id="KW-0009">Actin-binding</keyword>
<keyword id="KW-0130">Cell adhesion</keyword>
<keyword id="KW-0965">Cell junction</keyword>
<keyword id="KW-1003">Cell membrane</keyword>
<keyword id="KW-0963">Cytoplasm</keyword>
<keyword id="KW-0206">Cytoskeleton</keyword>
<keyword id="KW-0472">Membrane</keyword>
<keyword id="KW-0597">Phosphoprotein</keyword>
<keyword id="KW-1185">Reference proteome</keyword>
<keyword id="KW-0677">Repeat</keyword>
<sequence length="961" mass="106302">MPVFHTKTIESILDPVAQQVSRLVILHEEAEDGNAMPDLSRPVQVVSAAVANLVKVGRDTINSSDDKILRQDMPSALHRVEGASQLLEEASDMLRSDPYSGPARKKLIEGSRGILQGTSSLLLCFDESEVRKIIQECKRVLDYLAVAEVINTMEQLVQFLKDLSPCLSKVHREVGAREKELTHQVHSEILVRCLEQVKTLAPILICSMKVYIHIVEQQGRGAEEAAENRNYLAARMSDELQEIIRVLQLTTYDEDTSELDNLTVLKKLSNAISNKMEQANEWLSNPYALRGGVGEKALRQVIDNATEISERCLPQDSYPIRKLADEVTAMANTLCELRQEGKGQSPQAESLVRGIRDRMGELKSLVHQAVLGVDKAGVQQTAHTIQGRLEQAVKWLQHPEINDGGLGERAINLIVEEGRKVAEGCPGHQKAEIQQLCDEVERLKRQAAGSGPAAKQAAKQLTQKLYELKAAIQNALVNRIVQDFMDVSTPLKQFTEAVLQPEGTPGREQNFNQKSNNLQAFSDRASKTSRMVAAGGACGNKKIAEILLSSAAQVDSLTPQLISAGRIRMNYPGSKAADEHLQNLKQQYADTVLRMRTLCDQATDPADFIKTSEEHMQVYAKLCEDAIHARQPQKMVDNTSNIARLINRVLLVAKQEADNSEDPVFTERLNAAANRLERSLPAMVGDAKLVATNIADPAAAAAWKNSFQRLLGDVREVRDAIAPPQPPPLPTSLPPPIPELSALHLSNQNAERAPPRPPLPREGLAPVRPPPPETDDEDEGVFRTMPHANQPILIAARGLHQEVRQWSSKDNEIIAAAKRMAILMARLSELVLSDSRGSKRELIATAKKIAEASEDVTRLAKELARQCTDRRIRTNLLQVCERIPTIGTQLKILSTVKATMLGAQGSDEDREATEMLVGNAQNLMQSVKETVRAAEGASIKIRSDQTSNRLQWVRRQPWYQY</sequence>